<comment type="function">
    <text evidence="2 3">Reduces the permeability of the outer membrane to copper. Seems to be involved in the regulation of biofilm formation. May decrease biofilm formation by repressing cell-cell interaction and cell surface interaction.</text>
</comment>
<comment type="subcellular location">
    <subcellularLocation>
        <location evidence="3">Cell outer membrane</location>
    </subcellularLocation>
</comment>
<comment type="induction">
    <text evidence="2 3">Repressed by ComR. Induced by copper via release of ComR. Induced in biofilms and by several stress conditions.</text>
</comment>
<comment type="disruption phenotype">
    <text evidence="2 3">Disruption of this gene increases copper sensitivity, induces stress response genes in biofilms, increases aggregation and cell surface hydrophobicity, and decreases indole synthesis.</text>
</comment>
<comment type="similarity">
    <text evidence="4">Belongs to the BhsA/McbA family.</text>
</comment>
<accession>P0AB40</accession>
<accession>P75953</accession>
<reference key="1">
    <citation type="journal article" date="1996" name="DNA Res.">
        <title>A 718-kb DNA sequence of the Escherichia coli K-12 genome corresponding to the 12.7-28.0 min region on the linkage map.</title>
        <authorList>
            <person name="Oshima T."/>
            <person name="Aiba H."/>
            <person name="Baba T."/>
            <person name="Fujita K."/>
            <person name="Hayashi K."/>
            <person name="Honjo A."/>
            <person name="Ikemoto K."/>
            <person name="Inada T."/>
            <person name="Itoh T."/>
            <person name="Kajihara M."/>
            <person name="Kanai K."/>
            <person name="Kashimoto K."/>
            <person name="Kimura S."/>
            <person name="Kitagawa M."/>
            <person name="Makino K."/>
            <person name="Masuda S."/>
            <person name="Miki T."/>
            <person name="Mizobuchi K."/>
            <person name="Mori H."/>
            <person name="Motomura K."/>
            <person name="Nakamura Y."/>
            <person name="Nashimoto H."/>
            <person name="Nishio Y."/>
            <person name="Saito N."/>
            <person name="Sampei G."/>
            <person name="Seki Y."/>
            <person name="Tagami H."/>
            <person name="Takemoto K."/>
            <person name="Wada C."/>
            <person name="Yamamoto Y."/>
            <person name="Yano M."/>
            <person name="Horiuchi T."/>
        </authorList>
    </citation>
    <scope>NUCLEOTIDE SEQUENCE [LARGE SCALE GENOMIC DNA]</scope>
    <source>
        <strain>K12 / W3110 / ATCC 27325 / DSM 5911</strain>
    </source>
</reference>
<reference key="2">
    <citation type="journal article" date="1997" name="Science">
        <title>The complete genome sequence of Escherichia coli K-12.</title>
        <authorList>
            <person name="Blattner F.R."/>
            <person name="Plunkett G. III"/>
            <person name="Bloch C.A."/>
            <person name="Perna N.T."/>
            <person name="Burland V."/>
            <person name="Riley M."/>
            <person name="Collado-Vides J."/>
            <person name="Glasner J.D."/>
            <person name="Rode C.K."/>
            <person name="Mayhew G.F."/>
            <person name="Gregor J."/>
            <person name="Davis N.W."/>
            <person name="Kirkpatrick H.A."/>
            <person name="Goeden M.A."/>
            <person name="Rose D.J."/>
            <person name="Mau B."/>
            <person name="Shao Y."/>
        </authorList>
    </citation>
    <scope>NUCLEOTIDE SEQUENCE [LARGE SCALE GENOMIC DNA]</scope>
    <source>
        <strain>K12 / MG1655 / ATCC 47076</strain>
    </source>
</reference>
<reference key="3">
    <citation type="journal article" date="2006" name="Mol. Syst. Biol.">
        <title>Highly accurate genome sequences of Escherichia coli K-12 strains MG1655 and W3110.</title>
        <authorList>
            <person name="Hayashi K."/>
            <person name="Morooka N."/>
            <person name="Yamamoto Y."/>
            <person name="Fujita K."/>
            <person name="Isono K."/>
            <person name="Choi S."/>
            <person name="Ohtsubo E."/>
            <person name="Baba T."/>
            <person name="Wanner B.L."/>
            <person name="Mori H."/>
            <person name="Horiuchi T."/>
        </authorList>
    </citation>
    <scope>NUCLEOTIDE SEQUENCE [LARGE SCALE GENOMIC DNA]</scope>
    <source>
        <strain>K12 / W3110 / ATCC 27325 / DSM 5911</strain>
    </source>
</reference>
<reference key="4">
    <citation type="journal article" date="2007" name="J. Bacteriol.">
        <title>YcfR (BhsA) influences Escherichia coli biofilm formation through stress response and surface hydrophobicity.</title>
        <authorList>
            <person name="Zhang X.-S."/>
            <person name="Garcia-Contreras R."/>
            <person name="Wood T.K."/>
        </authorList>
    </citation>
    <scope>FUNCTION IN REGULATION OF BIOFILM FORMATION</scope>
    <scope>INDUCTION</scope>
    <scope>DISRUPTION PHENOTYPE</scope>
    <source>
        <strain>K12 / BW25113</strain>
    </source>
</reference>
<reference key="5">
    <citation type="journal article" date="2012" name="BioMetals">
        <title>The copper-inducible ComR (YcfQ) repressor regulates expression of ComC (YcfR), which affects copper permeability of the outer membrane of Escherichia coli.</title>
        <authorList>
            <person name="Mermod M."/>
            <person name="Magnani D."/>
            <person name="Solioz M."/>
            <person name="Stoyanov J.V."/>
        </authorList>
    </citation>
    <scope>FUNCTION IN COPPER TOLERANCE</scope>
    <scope>SUBCELLULAR LOCATION</scope>
    <scope>INDUCTION</scope>
    <scope>DISRUPTION PHENOTYPE</scope>
</reference>
<sequence length="85" mass="8815">MKNVKTLIAAAILSSMSFASFAAVEVQSTPEGQQKVGTISANAGTNLGSLEEQLAQKADEMGAKSFRITSVTGPNTLHGTAVIYK</sequence>
<proteinExistence type="evidence at protein level"/>
<feature type="signal peptide" evidence="1">
    <location>
        <begin position="1"/>
        <end position="22"/>
    </location>
</feature>
<feature type="chain" id="PRO_0000013825" description="Multiple stress resistance protein BhsA">
    <location>
        <begin position="23"/>
        <end position="85"/>
    </location>
</feature>
<evidence type="ECO:0000255" key="1"/>
<evidence type="ECO:0000269" key="2">
    <source>
    </source>
</evidence>
<evidence type="ECO:0000269" key="3">
    <source>
    </source>
</evidence>
<evidence type="ECO:0000305" key="4"/>
<gene>
    <name type="primary">bhsA</name>
    <name type="synonym">comC</name>
    <name type="synonym">ycfR</name>
    <name type="ordered locus">b1112</name>
    <name type="ordered locus">JW1098</name>
</gene>
<protein>
    <recommendedName>
        <fullName>Multiple stress resistance protein BhsA</fullName>
    </recommendedName>
    <alternativeName>
        <fullName>Copper-induced outer membrane component</fullName>
    </alternativeName>
</protein>
<organism>
    <name type="scientific">Escherichia coli (strain K12)</name>
    <dbReference type="NCBI Taxonomy" id="83333"/>
    <lineage>
        <taxon>Bacteria</taxon>
        <taxon>Pseudomonadati</taxon>
        <taxon>Pseudomonadota</taxon>
        <taxon>Gammaproteobacteria</taxon>
        <taxon>Enterobacterales</taxon>
        <taxon>Enterobacteriaceae</taxon>
        <taxon>Escherichia</taxon>
    </lineage>
</organism>
<name>BHSA_ECOLI</name>
<keyword id="KW-0998">Cell outer membrane</keyword>
<keyword id="KW-0186">Copper</keyword>
<keyword id="KW-0472">Membrane</keyword>
<keyword id="KW-1185">Reference proteome</keyword>
<keyword id="KW-0732">Signal</keyword>
<keyword id="KW-0346">Stress response</keyword>
<dbReference type="EMBL" id="U00096">
    <property type="protein sequence ID" value="AAC74196.1"/>
    <property type="molecule type" value="Genomic_DNA"/>
</dbReference>
<dbReference type="EMBL" id="AP009048">
    <property type="protein sequence ID" value="BAA35927.1"/>
    <property type="molecule type" value="Genomic_DNA"/>
</dbReference>
<dbReference type="PIR" id="E64855">
    <property type="entry name" value="E64855"/>
</dbReference>
<dbReference type="RefSeq" id="NP_415630.1">
    <property type="nucleotide sequence ID" value="NC_000913.3"/>
</dbReference>
<dbReference type="RefSeq" id="WP_000800153.1">
    <property type="nucleotide sequence ID" value="NZ_STEB01000016.1"/>
</dbReference>
<dbReference type="SMR" id="P0AB40"/>
<dbReference type="BioGRID" id="4261348">
    <property type="interactions" value="15"/>
</dbReference>
<dbReference type="DIP" id="DIP-48158N"/>
<dbReference type="FunCoup" id="P0AB40">
    <property type="interactions" value="18"/>
</dbReference>
<dbReference type="STRING" id="511145.b1112"/>
<dbReference type="PaxDb" id="511145-b1112"/>
<dbReference type="EnsemblBacteria" id="AAC74196">
    <property type="protein sequence ID" value="AAC74196"/>
    <property type="gene ID" value="b1112"/>
</dbReference>
<dbReference type="GeneID" id="75203698"/>
<dbReference type="GeneID" id="945492"/>
<dbReference type="KEGG" id="ecj:JW1098"/>
<dbReference type="KEGG" id="eco:b1112"/>
<dbReference type="KEGG" id="ecoc:C3026_06705"/>
<dbReference type="PATRIC" id="fig|1411691.4.peg.1155"/>
<dbReference type="EchoBASE" id="EB3210"/>
<dbReference type="eggNOG" id="ENOG5032ZBU">
    <property type="taxonomic scope" value="Bacteria"/>
</dbReference>
<dbReference type="HOGENOM" id="CLU_158602_2_3_6"/>
<dbReference type="InParanoid" id="P0AB40"/>
<dbReference type="OMA" id="IQYPQGQ"/>
<dbReference type="OrthoDB" id="6540461at2"/>
<dbReference type="PhylomeDB" id="P0AB40"/>
<dbReference type="BioCyc" id="EcoCyc:G6570-MONOMER"/>
<dbReference type="PRO" id="PR:P0AB40"/>
<dbReference type="Proteomes" id="UP000000625">
    <property type="component" value="Chromosome"/>
</dbReference>
<dbReference type="GO" id="GO:0009279">
    <property type="term" value="C:cell outer membrane"/>
    <property type="evidence" value="ECO:0000314"/>
    <property type="project" value="EcoCyc"/>
</dbReference>
<dbReference type="GO" id="GO:0046688">
    <property type="term" value="P:response to copper ion"/>
    <property type="evidence" value="ECO:0000315"/>
    <property type="project" value="EcoCyc"/>
</dbReference>
<dbReference type="GO" id="GO:0006950">
    <property type="term" value="P:response to stress"/>
    <property type="evidence" value="ECO:0000315"/>
    <property type="project" value="EcoCyc"/>
</dbReference>
<dbReference type="GO" id="GO:0044010">
    <property type="term" value="P:single-species biofilm formation"/>
    <property type="evidence" value="ECO:0000315"/>
    <property type="project" value="EcoCyc"/>
</dbReference>
<dbReference type="FunFam" id="3.30.1660.10:FF:000001">
    <property type="entry name" value="Multiple stress resistance protein BhsA"/>
    <property type="match status" value="1"/>
</dbReference>
<dbReference type="Gene3D" id="3.30.1660.10">
    <property type="entry name" value="Flavin-binding protein dodecin"/>
    <property type="match status" value="1"/>
</dbReference>
<dbReference type="InterPro" id="IPR051096">
    <property type="entry name" value="BhsA/McbA_stress_biofilm_assoc"/>
</dbReference>
<dbReference type="InterPro" id="IPR025543">
    <property type="entry name" value="Dodecin-like"/>
</dbReference>
<dbReference type="InterPro" id="IPR036275">
    <property type="entry name" value="YdgH-like_sf"/>
</dbReference>
<dbReference type="InterPro" id="IPR010854">
    <property type="entry name" value="YdgH/BhsA/McbA-like_dom"/>
</dbReference>
<dbReference type="NCBIfam" id="NF047859">
    <property type="entry name" value="StressCuResBhsA"/>
    <property type="match status" value="1"/>
</dbReference>
<dbReference type="PANTHER" id="PTHR34156:SF10">
    <property type="entry name" value="MULTIPLE STRESS RESISTANCE PROTEIN BHSA"/>
    <property type="match status" value="1"/>
</dbReference>
<dbReference type="PANTHER" id="PTHR34156">
    <property type="entry name" value="OUTER MEMBRANE PROTEIN-RELATED-RELATED"/>
    <property type="match status" value="1"/>
</dbReference>
<dbReference type="Pfam" id="PF07338">
    <property type="entry name" value="YdgH_BhsA-like"/>
    <property type="match status" value="1"/>
</dbReference>
<dbReference type="SUPFAM" id="SSF159871">
    <property type="entry name" value="YdgH-like"/>
    <property type="match status" value="1"/>
</dbReference>